<organism>
    <name type="scientific">Emericella nidulans (strain FGSC A4 / ATCC 38163 / CBS 112.46 / NRRL 194 / M139)</name>
    <name type="common">Aspergillus nidulans</name>
    <dbReference type="NCBI Taxonomy" id="227321"/>
    <lineage>
        <taxon>Eukaryota</taxon>
        <taxon>Fungi</taxon>
        <taxon>Dikarya</taxon>
        <taxon>Ascomycota</taxon>
        <taxon>Pezizomycotina</taxon>
        <taxon>Eurotiomycetes</taxon>
        <taxon>Eurotiomycetidae</taxon>
        <taxon>Eurotiales</taxon>
        <taxon>Aspergillaceae</taxon>
        <taxon>Aspergillus</taxon>
        <taxon>Aspergillus subgen. Nidulantes</taxon>
    </lineage>
</organism>
<sequence>MLRQAAQTRCWRTPARFVSHRPAFPRSNPVSAALGGTQFRKLSVKTQTDKNTLSDKKTAEADTSSSSSSAKSAAPSQQKTQNATTAQKNLLSESTVANKEQRKADWAIMREMAKYLWPKGDWGTKLRVGTALSLLVGAKVLNVEVPFYFKSIVDSMNVDFAAVGGTAYTVAGSMIIAYGATRIGATFFQELRNAVFASVAQKAIRKVARNVFEHLLRLDLNFHLSRQTGGLTRAIDRGTKGISFLLTSMVFHVVPTALEISLVCGILTHQYGIKFAAITATTMLAYSAFTIATTAWRTKFRKQANAADNRGATVAVDSLINYEAVKYFNNEKFEVARYDKALKAYEDASIKVTTSLAFLNSGQNMIFSSALAAMMYLAADGVATGSLTVGDLVMVNQLVFQLSVPLNFLGSVYRELRQSLLDMETLFNLQKVNVNIKEKPDAKPLELKQGGQIRFENVTFGYHPERPILKNASFTIPAGQKFAIVGPSGCGKSTILRLLFRYYDVQEGRILVDGQDIRHVTIESLRKAIGVVPQDTPLFNDTIEHNIRYGRLDASDEEVRKAARRAHIHELVERLPEGYRTAVGERGMMISGGEKQRLAISRLLLKDPQLLFFDEATSALDTYTEQALMQNINSILKEKGRTSVFVAHRLRTIYDCDQILVLKDGQVAELGSHRELLDLDGIYAELWSAQETSLAQDPEYERNAGLEGETAGEVEDKAPRQ</sequence>
<name>ATM1_EMENI</name>
<reference key="1">
    <citation type="journal article" date="2005" name="Nature">
        <title>Sequencing of Aspergillus nidulans and comparative analysis with A. fumigatus and A. oryzae.</title>
        <authorList>
            <person name="Galagan J.E."/>
            <person name="Calvo S.E."/>
            <person name="Cuomo C."/>
            <person name="Ma L.-J."/>
            <person name="Wortman J.R."/>
            <person name="Batzoglou S."/>
            <person name="Lee S.-I."/>
            <person name="Bastuerkmen M."/>
            <person name="Spevak C.C."/>
            <person name="Clutterbuck J."/>
            <person name="Kapitonov V."/>
            <person name="Jurka J."/>
            <person name="Scazzocchio C."/>
            <person name="Farman M.L."/>
            <person name="Butler J."/>
            <person name="Purcell S."/>
            <person name="Harris S."/>
            <person name="Braus G.H."/>
            <person name="Draht O."/>
            <person name="Busch S."/>
            <person name="D'Enfert C."/>
            <person name="Bouchier C."/>
            <person name="Goldman G.H."/>
            <person name="Bell-Pedersen D."/>
            <person name="Griffiths-Jones S."/>
            <person name="Doonan J.H."/>
            <person name="Yu J."/>
            <person name="Vienken K."/>
            <person name="Pain A."/>
            <person name="Freitag M."/>
            <person name="Selker E.U."/>
            <person name="Archer D.B."/>
            <person name="Penalva M.A."/>
            <person name="Oakley B.R."/>
            <person name="Momany M."/>
            <person name="Tanaka T."/>
            <person name="Kumagai T."/>
            <person name="Asai K."/>
            <person name="Machida M."/>
            <person name="Nierman W.C."/>
            <person name="Denning D.W."/>
            <person name="Caddick M.X."/>
            <person name="Hynes M."/>
            <person name="Paoletti M."/>
            <person name="Fischer R."/>
            <person name="Miller B.L."/>
            <person name="Dyer P.S."/>
            <person name="Sachs M.S."/>
            <person name="Osmani S.A."/>
            <person name="Birren B.W."/>
        </authorList>
    </citation>
    <scope>NUCLEOTIDE SEQUENCE [LARGE SCALE GENOMIC DNA]</scope>
    <source>
        <strain>FGSC A4 / ATCC 38163 / CBS 112.46 / NRRL 194 / M139</strain>
    </source>
</reference>
<reference key="2">
    <citation type="journal article" date="2009" name="Fungal Genet. Biol.">
        <title>The 2008 update of the Aspergillus nidulans genome annotation: a community effort.</title>
        <authorList>
            <person name="Wortman J.R."/>
            <person name="Gilsenan J.M."/>
            <person name="Joardar V."/>
            <person name="Deegan J."/>
            <person name="Clutterbuck J."/>
            <person name="Andersen M.R."/>
            <person name="Archer D."/>
            <person name="Bencina M."/>
            <person name="Braus G."/>
            <person name="Coutinho P."/>
            <person name="von Dohren H."/>
            <person name="Doonan J."/>
            <person name="Driessen A.J."/>
            <person name="Durek P."/>
            <person name="Espeso E."/>
            <person name="Fekete E."/>
            <person name="Flipphi M."/>
            <person name="Estrada C.G."/>
            <person name="Geysens S."/>
            <person name="Goldman G."/>
            <person name="de Groot P.W."/>
            <person name="Hansen K."/>
            <person name="Harris S.D."/>
            <person name="Heinekamp T."/>
            <person name="Helmstaedt K."/>
            <person name="Henrissat B."/>
            <person name="Hofmann G."/>
            <person name="Homan T."/>
            <person name="Horio T."/>
            <person name="Horiuchi H."/>
            <person name="James S."/>
            <person name="Jones M."/>
            <person name="Karaffa L."/>
            <person name="Karanyi Z."/>
            <person name="Kato M."/>
            <person name="Keller N."/>
            <person name="Kelly D.E."/>
            <person name="Kiel J.A."/>
            <person name="Kim J.M."/>
            <person name="van der Klei I.J."/>
            <person name="Klis F.M."/>
            <person name="Kovalchuk A."/>
            <person name="Krasevec N."/>
            <person name="Kubicek C.P."/>
            <person name="Liu B."/>
            <person name="Maccabe A."/>
            <person name="Meyer V."/>
            <person name="Mirabito P."/>
            <person name="Miskei M."/>
            <person name="Mos M."/>
            <person name="Mullins J."/>
            <person name="Nelson D.R."/>
            <person name="Nielsen J."/>
            <person name="Oakley B.R."/>
            <person name="Osmani S.A."/>
            <person name="Pakula T."/>
            <person name="Paszewski A."/>
            <person name="Paulsen I."/>
            <person name="Pilsyk S."/>
            <person name="Pocsi I."/>
            <person name="Punt P.J."/>
            <person name="Ram A.F."/>
            <person name="Ren Q."/>
            <person name="Robellet X."/>
            <person name="Robson G."/>
            <person name="Seiboth B."/>
            <person name="van Solingen P."/>
            <person name="Specht T."/>
            <person name="Sun J."/>
            <person name="Taheri-Talesh N."/>
            <person name="Takeshita N."/>
            <person name="Ussery D."/>
            <person name="vanKuyk P.A."/>
            <person name="Visser H."/>
            <person name="van de Vondervoort P.J."/>
            <person name="de Vries R.P."/>
            <person name="Walton J."/>
            <person name="Xiang X."/>
            <person name="Xiong Y."/>
            <person name="Zeng A.P."/>
            <person name="Brandt B.W."/>
            <person name="Cornell M.J."/>
            <person name="van den Hondel C.A."/>
            <person name="Visser J."/>
            <person name="Oliver S.G."/>
            <person name="Turner G."/>
        </authorList>
    </citation>
    <scope>GENOME REANNOTATION</scope>
    <source>
        <strain>FGSC A4 / ATCC 38163 / CBS 112.46 / NRRL 194 / M139</strain>
    </source>
</reference>
<feature type="transit peptide" description="Mitochondrion" evidence="4">
    <location>
        <begin position="1"/>
        <end position="17"/>
    </location>
</feature>
<feature type="chain" id="PRO_0000255445" description="Iron-sulfur clusters transporter atm1, mitochondrial">
    <location>
        <begin position="18"/>
        <end position="721"/>
    </location>
</feature>
<feature type="topological domain" description="Mitochondrial matrix" evidence="1">
    <location>
        <begin position="18"/>
        <end position="127"/>
    </location>
</feature>
<feature type="transmembrane region" description="Helical" evidence="6">
    <location>
        <begin position="128"/>
        <end position="149"/>
    </location>
</feature>
<feature type="topological domain" description="Mitochondrial intermembrane" evidence="1">
    <location>
        <begin position="150"/>
        <end position="172"/>
    </location>
</feature>
<feature type="transmembrane region" description="Helical" evidence="6">
    <location>
        <begin position="173"/>
        <end position="196"/>
    </location>
</feature>
<feature type="topological domain" description="Mitochondrial matrix" evidence="1">
    <location>
        <begin position="197"/>
        <end position="245"/>
    </location>
</feature>
<feature type="transmembrane region" description="Helical" evidence="6">
    <location>
        <begin position="246"/>
        <end position="269"/>
    </location>
</feature>
<feature type="topological domain" description="Mitochondrial intermembrane" evidence="1">
    <location>
        <position position="270"/>
    </location>
</feature>
<feature type="transmembrane region" description="Helical" evidence="6">
    <location>
        <begin position="271"/>
        <end position="291"/>
    </location>
</feature>
<feature type="topological domain" description="Mitochondrial matrix" evidence="1">
    <location>
        <begin position="292"/>
        <end position="357"/>
    </location>
</feature>
<feature type="transmembrane region" description="Helical" evidence="6">
    <location>
        <begin position="358"/>
        <end position="376"/>
    </location>
</feature>
<feature type="topological domain" description="Mitochondrial intermembrane" evidence="1">
    <location>
        <begin position="377"/>
        <end position="391"/>
    </location>
</feature>
<feature type="transmembrane region" description="Helical" evidence="6">
    <location>
        <begin position="392"/>
        <end position="413"/>
    </location>
</feature>
<feature type="topological domain" description="Mitochondrial matrix" evidence="1">
    <location>
        <begin position="414"/>
        <end position="721"/>
    </location>
</feature>
<feature type="domain" description="ABC transmembrane type-1" evidence="6">
    <location>
        <begin position="128"/>
        <end position="418"/>
    </location>
</feature>
<feature type="domain" description="ABC transporter" evidence="5">
    <location>
        <begin position="453"/>
        <end position="689"/>
    </location>
</feature>
<feature type="region of interest" description="Disordered" evidence="7">
    <location>
        <begin position="41"/>
        <end position="96"/>
    </location>
</feature>
<feature type="region of interest" description="Disordered" evidence="7">
    <location>
        <begin position="694"/>
        <end position="721"/>
    </location>
</feature>
<feature type="compositionally biased region" description="Low complexity" evidence="7">
    <location>
        <begin position="61"/>
        <end position="89"/>
    </location>
</feature>
<feature type="binding site" evidence="1">
    <location>
        <begin position="297"/>
        <end position="301"/>
    </location>
    <ligand>
        <name>glutathione</name>
        <dbReference type="ChEBI" id="CHEBI:57925"/>
    </ligand>
</feature>
<feature type="binding site" evidence="1">
    <location>
        <begin position="360"/>
        <end position="363"/>
    </location>
    <ligand>
        <name>glutathione</name>
        <dbReference type="ChEBI" id="CHEBI:57925"/>
    </ligand>
</feature>
<feature type="binding site" evidence="2">
    <location>
        <position position="410"/>
    </location>
    <ligand>
        <name>glutathione</name>
        <dbReference type="ChEBI" id="CHEBI:57925"/>
    </ligand>
</feature>
<feature type="binding site" evidence="3">
    <location>
        <position position="462"/>
    </location>
    <ligand>
        <name>ATP</name>
        <dbReference type="ChEBI" id="CHEBI:30616"/>
    </ligand>
</feature>
<feature type="binding site" evidence="5">
    <location>
        <begin position="486"/>
        <end position="497"/>
    </location>
    <ligand>
        <name>ATP</name>
        <dbReference type="ChEBI" id="CHEBI:30616"/>
    </ligand>
</feature>
<protein>
    <recommendedName>
        <fullName evidence="8">Iron-sulfur clusters transporter atm1, mitochondrial</fullName>
        <ecNumber evidence="2">7.-.-.-</ecNumber>
    </recommendedName>
</protein>
<comment type="function">
    <text evidence="1">Performs an essential function in the generation of cytoplasmic iron-sulfur proteins by mediating the ATP-dependent export of Fe/S cluster precursors synthesized by nfs1 and other mitochondrial proteins (By similarity). Hydrolyzes ATP (By similarity). Binds glutathione and may function by transporting a glutathione-conjugated iron-sulfur compound (By similarity).</text>
</comment>
<comment type="subunit">
    <text evidence="1">Homodimer.</text>
</comment>
<comment type="subcellular location">
    <subcellularLocation>
        <location evidence="1">Mitochondrion inner membrane</location>
        <topology evidence="6">Multi-pass membrane protein</topology>
    </subcellularLocation>
</comment>
<comment type="similarity">
    <text evidence="8">Belongs to the ABC transporter superfamily. ABCB family. Heavy Metal importer (TC 3.A.1.210) subfamily.</text>
</comment>
<comment type="sequence caution" evidence="8">
    <conflict type="erroneous gene model prediction">
        <sequence resource="EMBL-CDS" id="EAA62688"/>
    </conflict>
</comment>
<proteinExistence type="inferred from homology"/>
<dbReference type="EC" id="7.-.-.-" evidence="2"/>
<dbReference type="EMBL" id="AACD01000094">
    <property type="protein sequence ID" value="EAA62688.1"/>
    <property type="status" value="ALT_SEQ"/>
    <property type="molecule type" value="Genomic_DNA"/>
</dbReference>
<dbReference type="EMBL" id="BN001305">
    <property type="protein sequence ID" value="CBF81731.1"/>
    <property type="molecule type" value="Genomic_DNA"/>
</dbReference>
<dbReference type="RefSeq" id="XP_663132.1">
    <property type="nucleotide sequence ID" value="XM_658040.1"/>
</dbReference>
<dbReference type="SMR" id="Q5B1Q2"/>
<dbReference type="FunCoup" id="Q5B1Q2">
    <property type="interactions" value="659"/>
</dbReference>
<dbReference type="STRING" id="227321.Q5B1Q2"/>
<dbReference type="EnsemblFungi" id="CBF81731">
    <property type="protein sequence ID" value="CBF81731"/>
    <property type="gene ID" value="ANIA_05528"/>
</dbReference>
<dbReference type="VEuPathDB" id="FungiDB:AN5528"/>
<dbReference type="eggNOG" id="KOG0057">
    <property type="taxonomic scope" value="Eukaryota"/>
</dbReference>
<dbReference type="HOGENOM" id="CLU_000604_84_1_1"/>
<dbReference type="InParanoid" id="Q5B1Q2"/>
<dbReference type="OMA" id="VFHIIPI"/>
<dbReference type="OrthoDB" id="6500128at2759"/>
<dbReference type="Proteomes" id="UP000000560">
    <property type="component" value="Chromosome V"/>
</dbReference>
<dbReference type="GO" id="GO:0005743">
    <property type="term" value="C:mitochondrial inner membrane"/>
    <property type="evidence" value="ECO:0000318"/>
    <property type="project" value="GO_Central"/>
</dbReference>
<dbReference type="GO" id="GO:0140359">
    <property type="term" value="F:ABC-type transporter activity"/>
    <property type="evidence" value="ECO:0007669"/>
    <property type="project" value="InterPro"/>
</dbReference>
<dbReference type="GO" id="GO:0005524">
    <property type="term" value="F:ATP binding"/>
    <property type="evidence" value="ECO:0007669"/>
    <property type="project" value="UniProtKB-KW"/>
</dbReference>
<dbReference type="GO" id="GO:0016887">
    <property type="term" value="F:ATP hydrolysis activity"/>
    <property type="evidence" value="ECO:0007669"/>
    <property type="project" value="InterPro"/>
</dbReference>
<dbReference type="GO" id="GO:0042626">
    <property type="term" value="F:ATPase-coupled transmembrane transporter activity"/>
    <property type="evidence" value="ECO:0000318"/>
    <property type="project" value="GO_Central"/>
</dbReference>
<dbReference type="GO" id="GO:0006879">
    <property type="term" value="P:intracellular iron ion homeostasis"/>
    <property type="evidence" value="ECO:0000318"/>
    <property type="project" value="GO_Central"/>
</dbReference>
<dbReference type="GO" id="GO:0055085">
    <property type="term" value="P:transmembrane transport"/>
    <property type="evidence" value="ECO:0000318"/>
    <property type="project" value="GO_Central"/>
</dbReference>
<dbReference type="CDD" id="cd18582">
    <property type="entry name" value="ABC_6TM_ATM1_ABCB7"/>
    <property type="match status" value="1"/>
</dbReference>
<dbReference type="CDD" id="cd03253">
    <property type="entry name" value="ABCC_ATM1_transporter"/>
    <property type="match status" value="1"/>
</dbReference>
<dbReference type="FunFam" id="1.20.1560.10:FF:000004">
    <property type="entry name" value="ATP-binding cassette sub-family B member 7"/>
    <property type="match status" value="1"/>
</dbReference>
<dbReference type="FunFam" id="3.40.50.300:FF:000186">
    <property type="entry name" value="ATP-binding cassette sub-family B member 7, mitochondrial"/>
    <property type="match status" value="1"/>
</dbReference>
<dbReference type="Gene3D" id="1.20.1560.10">
    <property type="entry name" value="ABC transporter type 1, transmembrane domain"/>
    <property type="match status" value="1"/>
</dbReference>
<dbReference type="Gene3D" id="3.40.50.300">
    <property type="entry name" value="P-loop containing nucleotide triphosphate hydrolases"/>
    <property type="match status" value="1"/>
</dbReference>
<dbReference type="InterPro" id="IPR003593">
    <property type="entry name" value="AAA+_ATPase"/>
</dbReference>
<dbReference type="InterPro" id="IPR011527">
    <property type="entry name" value="ABC1_TM_dom"/>
</dbReference>
<dbReference type="InterPro" id="IPR036640">
    <property type="entry name" value="ABC1_TM_sf"/>
</dbReference>
<dbReference type="InterPro" id="IPR003439">
    <property type="entry name" value="ABC_transporter-like_ATP-bd"/>
</dbReference>
<dbReference type="InterPro" id="IPR017871">
    <property type="entry name" value="ABC_transporter-like_CS"/>
</dbReference>
<dbReference type="InterPro" id="IPR027417">
    <property type="entry name" value="P-loop_NTPase"/>
</dbReference>
<dbReference type="InterPro" id="IPR039421">
    <property type="entry name" value="Type_1_exporter"/>
</dbReference>
<dbReference type="PANTHER" id="PTHR24221">
    <property type="entry name" value="ATP-BINDING CASSETTE SUB-FAMILY B"/>
    <property type="match status" value="1"/>
</dbReference>
<dbReference type="PANTHER" id="PTHR24221:SF402">
    <property type="entry name" value="IRON-SULFUR CLUSTERS TRANSPORTER ABCB7, MITOCHONDRIAL"/>
    <property type="match status" value="1"/>
</dbReference>
<dbReference type="Pfam" id="PF00664">
    <property type="entry name" value="ABC_membrane"/>
    <property type="match status" value="1"/>
</dbReference>
<dbReference type="Pfam" id="PF00005">
    <property type="entry name" value="ABC_tran"/>
    <property type="match status" value="1"/>
</dbReference>
<dbReference type="SMART" id="SM00382">
    <property type="entry name" value="AAA"/>
    <property type="match status" value="1"/>
</dbReference>
<dbReference type="SUPFAM" id="SSF90123">
    <property type="entry name" value="ABC transporter transmembrane region"/>
    <property type="match status" value="1"/>
</dbReference>
<dbReference type="SUPFAM" id="SSF52540">
    <property type="entry name" value="P-loop containing nucleoside triphosphate hydrolases"/>
    <property type="match status" value="1"/>
</dbReference>
<dbReference type="PROSITE" id="PS50929">
    <property type="entry name" value="ABC_TM1F"/>
    <property type="match status" value="1"/>
</dbReference>
<dbReference type="PROSITE" id="PS00211">
    <property type="entry name" value="ABC_TRANSPORTER_1"/>
    <property type="match status" value="1"/>
</dbReference>
<dbReference type="PROSITE" id="PS50893">
    <property type="entry name" value="ABC_TRANSPORTER_2"/>
    <property type="match status" value="1"/>
</dbReference>
<gene>
    <name evidence="8" type="primary">atm1</name>
    <name type="ORF">AN5528</name>
</gene>
<evidence type="ECO:0000250" key="1">
    <source>
        <dbReference type="UniProtKB" id="P40416"/>
    </source>
</evidence>
<evidence type="ECO:0000250" key="2">
    <source>
        <dbReference type="UniProtKB" id="Q2G506"/>
    </source>
</evidence>
<evidence type="ECO:0000250" key="3">
    <source>
        <dbReference type="UniProtKB" id="Q9NP58"/>
    </source>
</evidence>
<evidence type="ECO:0000255" key="4"/>
<evidence type="ECO:0000255" key="5">
    <source>
        <dbReference type="PROSITE-ProRule" id="PRU00434"/>
    </source>
</evidence>
<evidence type="ECO:0000255" key="6">
    <source>
        <dbReference type="PROSITE-ProRule" id="PRU00441"/>
    </source>
</evidence>
<evidence type="ECO:0000256" key="7">
    <source>
        <dbReference type="SAM" id="MobiDB-lite"/>
    </source>
</evidence>
<evidence type="ECO:0000305" key="8"/>
<accession>Q5B1Q2</accession>
<accession>C8VG84</accession>
<keyword id="KW-0067">ATP-binding</keyword>
<keyword id="KW-0472">Membrane</keyword>
<keyword id="KW-0496">Mitochondrion</keyword>
<keyword id="KW-0999">Mitochondrion inner membrane</keyword>
<keyword id="KW-0547">Nucleotide-binding</keyword>
<keyword id="KW-1185">Reference proteome</keyword>
<keyword id="KW-0809">Transit peptide</keyword>
<keyword id="KW-1278">Translocase</keyword>
<keyword id="KW-0812">Transmembrane</keyword>
<keyword id="KW-1133">Transmembrane helix</keyword>
<keyword id="KW-0813">Transport</keyword>